<sequence length="45" mass="5353">MEYVKFLEDYVREKVKKMFSSNVKLSFNDLKVSAKIVELKKRGVK</sequence>
<keyword id="KW-1185">Reference proteome</keyword>
<gene>
    <name type="ordered locus">MJ1671</name>
</gene>
<proteinExistence type="predicted"/>
<reference key="1">
    <citation type="journal article" date="1996" name="Science">
        <title>Complete genome sequence of the methanogenic archaeon, Methanococcus jannaschii.</title>
        <authorList>
            <person name="Bult C.J."/>
            <person name="White O."/>
            <person name="Olsen G.J."/>
            <person name="Zhou L."/>
            <person name="Fleischmann R.D."/>
            <person name="Sutton G.G."/>
            <person name="Blake J.A."/>
            <person name="FitzGerald L.M."/>
            <person name="Clayton R.A."/>
            <person name="Gocayne J.D."/>
            <person name="Kerlavage A.R."/>
            <person name="Dougherty B.A."/>
            <person name="Tomb J.-F."/>
            <person name="Adams M.D."/>
            <person name="Reich C.I."/>
            <person name="Overbeek R."/>
            <person name="Kirkness E.F."/>
            <person name="Weinstock K.G."/>
            <person name="Merrick J.M."/>
            <person name="Glodek A."/>
            <person name="Scott J.L."/>
            <person name="Geoghagen N.S.M."/>
            <person name="Weidman J.F."/>
            <person name="Fuhrmann J.L."/>
            <person name="Nguyen D."/>
            <person name="Utterback T.R."/>
            <person name="Kelley J.M."/>
            <person name="Peterson J.D."/>
            <person name="Sadow P.W."/>
            <person name="Hanna M.C."/>
            <person name="Cotton M.D."/>
            <person name="Roberts K.M."/>
            <person name="Hurst M.A."/>
            <person name="Kaine B.P."/>
            <person name="Borodovsky M."/>
            <person name="Klenk H.-P."/>
            <person name="Fraser C.M."/>
            <person name="Smith H.O."/>
            <person name="Woese C.R."/>
            <person name="Venter J.C."/>
        </authorList>
    </citation>
    <scope>NUCLEOTIDE SEQUENCE [LARGE SCALE GENOMIC DNA]</scope>
    <source>
        <strain>ATCC 43067 / DSM 2661 / JAL-1 / JCM 10045 / NBRC 100440</strain>
    </source>
</reference>
<dbReference type="EMBL" id="L77117">
    <property type="protein sequence ID" value="AAB99694.1"/>
    <property type="molecule type" value="Genomic_DNA"/>
</dbReference>
<dbReference type="PIR" id="E64508">
    <property type="entry name" value="E64508"/>
</dbReference>
<dbReference type="RefSeq" id="WP_010871195.1">
    <property type="nucleotide sequence ID" value="NC_000909.1"/>
</dbReference>
<dbReference type="SMR" id="Q59065"/>
<dbReference type="STRING" id="243232.MJ_1671"/>
<dbReference type="PaxDb" id="243232-MJ_1671"/>
<dbReference type="EnsemblBacteria" id="AAB99694">
    <property type="protein sequence ID" value="AAB99694"/>
    <property type="gene ID" value="MJ_1671"/>
</dbReference>
<dbReference type="GeneID" id="63606510"/>
<dbReference type="KEGG" id="mja:MJ_1671"/>
<dbReference type="HOGENOM" id="CLU_3194507_0_0_2"/>
<dbReference type="InParanoid" id="Q59065"/>
<dbReference type="OrthoDB" id="57429at2157"/>
<dbReference type="Proteomes" id="UP000000805">
    <property type="component" value="Chromosome"/>
</dbReference>
<organism>
    <name type="scientific">Methanocaldococcus jannaschii (strain ATCC 43067 / DSM 2661 / JAL-1 / JCM 10045 / NBRC 100440)</name>
    <name type="common">Methanococcus jannaschii</name>
    <dbReference type="NCBI Taxonomy" id="243232"/>
    <lineage>
        <taxon>Archaea</taxon>
        <taxon>Methanobacteriati</taxon>
        <taxon>Methanobacteriota</taxon>
        <taxon>Methanomada group</taxon>
        <taxon>Methanococci</taxon>
        <taxon>Methanococcales</taxon>
        <taxon>Methanocaldococcaceae</taxon>
        <taxon>Methanocaldococcus</taxon>
    </lineage>
</organism>
<protein>
    <recommendedName>
        <fullName>Uncharacterized protein MJ1671</fullName>
    </recommendedName>
</protein>
<name>Y1671_METJA</name>
<feature type="chain" id="PRO_0000107469" description="Uncharacterized protein MJ1671">
    <location>
        <begin position="1"/>
        <end position="45"/>
    </location>
</feature>
<accession>Q59065</accession>